<organism>
    <name type="scientific">Photinus pyralis</name>
    <name type="common">Common eastern firefly</name>
    <name type="synonym">Lampyris pyralis</name>
    <dbReference type="NCBI Taxonomy" id="7054"/>
    <lineage>
        <taxon>Eukaryota</taxon>
        <taxon>Metazoa</taxon>
        <taxon>Ecdysozoa</taxon>
        <taxon>Arthropoda</taxon>
        <taxon>Hexapoda</taxon>
        <taxon>Insecta</taxon>
        <taxon>Pterygota</taxon>
        <taxon>Neoptera</taxon>
        <taxon>Endopterygota</taxon>
        <taxon>Coleoptera</taxon>
        <taxon>Polyphaga</taxon>
        <taxon>Elateriformia</taxon>
        <taxon>Elateroidea</taxon>
        <taxon>Lampyridae</taxon>
        <taxon>Lampyrinae</taxon>
        <taxon>Photinus</taxon>
    </lineage>
</organism>
<sequence length="370" mass="43274">MFASILGKIPQYSTISSKCSLKECRKVKKVENSDEIGEIIHRDFLDPFCNEYVLIGEEETSLGINYLQFEEEIRTFEIRDSDIIVASYPKAGTTWTQELVWLIGNDLDFKAAEEHLDKRFPHFELCTIVNFAKMTEMLGSTRPEYIGNSINYLRDLEGTRFIKTHLTYNLLPEQILNGNRKPKIIYVMRDPKDVCVSYYHHGRLIQGWRADFQNFSKVFLSEKIMFGSYWKHVLGYWEHRDKPNVLILTYEEMKKDLLSVIRKTAQFLDKKLNENKIPQLLKHLSFESMKNNRAVNQQDKIESRMKHKLVPEQGAFMRSGTSQNYKGEMSEELILKFDEWTKKSISGSSFVTEPIADLYLNTSQKSVPKM</sequence>
<proteinExistence type="evidence at protein level"/>
<feature type="chain" id="PRO_0000446868" description="Luciferin sulfotransferase">
    <location>
        <begin position="1"/>
        <end position="370"/>
    </location>
</feature>
<feature type="active site" description="Proton acceptor" evidence="2">
    <location>
        <position position="165"/>
    </location>
</feature>
<feature type="binding site" evidence="1">
    <location>
        <begin position="90"/>
        <end position="95"/>
    </location>
    <ligand>
        <name>3'-phosphoadenylyl sulfate</name>
        <dbReference type="ChEBI" id="CHEBI:58339"/>
    </ligand>
</feature>
<feature type="binding site" evidence="1">
    <location>
        <position position="189"/>
    </location>
    <ligand>
        <name>3'-phosphoadenylyl sulfate</name>
        <dbReference type="ChEBI" id="CHEBI:58339"/>
    </ligand>
</feature>
<feature type="binding site" evidence="1">
    <location>
        <position position="197"/>
    </location>
    <ligand>
        <name>3'-phosphoadenylyl sulfate</name>
        <dbReference type="ChEBI" id="CHEBI:58339"/>
    </ligand>
</feature>
<feature type="binding site" evidence="1">
    <location>
        <position position="250"/>
    </location>
    <ligand>
        <name>3'-phosphoadenylyl sulfate</name>
        <dbReference type="ChEBI" id="CHEBI:58339"/>
    </ligand>
</feature>
<feature type="binding site" evidence="1">
    <location>
        <begin position="284"/>
        <end position="289"/>
    </location>
    <ligand>
        <name>3'-phosphoadenylyl sulfate</name>
        <dbReference type="ChEBI" id="CHEBI:58339"/>
    </ligand>
</feature>
<feature type="binding site" evidence="1">
    <location>
        <begin position="316"/>
        <end position="320"/>
    </location>
    <ligand>
        <name>3'-phosphoadenylyl sulfate</name>
        <dbReference type="ChEBI" id="CHEBI:58339"/>
    </ligand>
</feature>
<dbReference type="EC" id="2.8.2.-" evidence="3"/>
<dbReference type="EMBL" id="KX097998">
    <property type="protein sequence ID" value="ANH56803.1"/>
    <property type="molecule type" value="mRNA"/>
</dbReference>
<dbReference type="EMBL" id="GEZM01002344">
    <property type="protein sequence ID" value="JAV97315.1"/>
    <property type="molecule type" value="Transcribed_RNA"/>
</dbReference>
<dbReference type="SMR" id="A0A173GP47"/>
<dbReference type="OrthoDB" id="205623at2759"/>
<dbReference type="BRENDA" id="2.8.2.10">
    <property type="organism ID" value="4775"/>
</dbReference>
<dbReference type="GO" id="GO:0008146">
    <property type="term" value="F:sulfotransferase activity"/>
    <property type="evidence" value="ECO:0000314"/>
    <property type="project" value="UniProtKB"/>
</dbReference>
<dbReference type="FunFam" id="3.40.50.300:FF:001762">
    <property type="entry name" value="Sulfotransferase 3, isoform A"/>
    <property type="match status" value="1"/>
</dbReference>
<dbReference type="Gene3D" id="3.40.50.300">
    <property type="entry name" value="P-loop containing nucleotide triphosphate hydrolases"/>
    <property type="match status" value="1"/>
</dbReference>
<dbReference type="InterPro" id="IPR027417">
    <property type="entry name" value="P-loop_NTPase"/>
</dbReference>
<dbReference type="InterPro" id="IPR000863">
    <property type="entry name" value="Sulfotransferase_dom"/>
</dbReference>
<dbReference type="PANTHER" id="PTHR11783">
    <property type="entry name" value="SULFOTRANSFERASE SULT"/>
    <property type="match status" value="1"/>
</dbReference>
<dbReference type="Pfam" id="PF00685">
    <property type="entry name" value="Sulfotransfer_1"/>
    <property type="match status" value="1"/>
</dbReference>
<dbReference type="SUPFAM" id="SSF52540">
    <property type="entry name" value="P-loop containing nucleoside triphosphate hydrolases"/>
    <property type="match status" value="1"/>
</dbReference>
<gene>
    <name evidence="4 7" type="primary">LST</name>
</gene>
<keyword id="KW-0808">Transferase</keyword>
<accession>A0A173GP47</accession>
<reference key="1">
    <citation type="journal article" date="2016" name="Biochemistry">
        <title>Sulfoluciferin is Biosynthesized by a Specialized Luciferin Sulfotransferase in Fireflies.</title>
        <authorList>
            <person name="Fallon T.R."/>
            <person name="Li F.S."/>
            <person name="Vicent M.A."/>
            <person name="Weng J.K."/>
        </authorList>
    </citation>
    <scope>NUCLEOTIDE SEQUENCE [MRNA]</scope>
    <scope>FUNCTION</scope>
    <scope>CATALYTIC ACTIVITY</scope>
    <scope>BIOPHYSICOCHEMICAL PROPERTIES</scope>
    <scope>ACTIVITY REGULATION</scope>
    <scope>BIOTECHNOLOGY</scope>
</reference>
<reference key="2">
    <citation type="journal article" date="2016" name="Sci. Rep.">
        <title>Molecular characterization of firefly nuptial gifts: a multi-omics approach sheds light on postcopulatory sexual selection.</title>
        <authorList>
            <person name="Al-Wathiqui N."/>
            <person name="Fallon T.R."/>
            <person name="South A."/>
            <person name="Weng J.K."/>
            <person name="Lewis S.M."/>
        </authorList>
    </citation>
    <scope>NUCLEOTIDE SEQUENCE [LARGE SCALE MRNA]</scope>
</reference>
<protein>
    <recommendedName>
        <fullName evidence="4">Luciferin sulfotransferase</fullName>
        <ecNumber evidence="3">2.8.2.-</ecNumber>
    </recommendedName>
</protein>
<evidence type="ECO:0000250" key="1">
    <source>
        <dbReference type="UniProtKB" id="O75897"/>
    </source>
</evidence>
<evidence type="ECO:0000250" key="2">
    <source>
        <dbReference type="UniProtKB" id="P49891"/>
    </source>
</evidence>
<evidence type="ECO:0000269" key="3">
    <source>
    </source>
</evidence>
<evidence type="ECO:0000303" key="4">
    <source>
    </source>
</evidence>
<evidence type="ECO:0000305" key="5"/>
<evidence type="ECO:0000305" key="6">
    <source>
    </source>
</evidence>
<evidence type="ECO:0000312" key="7">
    <source>
        <dbReference type="EMBL" id="ANH56803.1"/>
    </source>
</evidence>
<comment type="function">
    <text evidence="3">Catalyzes the production of firefly sulfoluciferin from luciferin using the sulfo-donor 3'-phosphoadenylyl sulfate (PAPS). Is also able to catalyze the reverse reaction, i.e. the adenosine 3',5'-bisphosphate-dependent desulfonation of sulfoluciferin. Can use either D- or L-luciferin stereoisomer as substrate. Sulfoluciferin, which is not a substrate of P.pyralis luciferase, likely serves as a luciferin storage form in fireflies.</text>
</comment>
<comment type="catalytic activity">
    <reaction evidence="3">
        <text>firefly D-luciferin + 3'-phosphoadenylyl sulfate = firefly D-sulfoluciferin + adenosine 3',5'-bisphosphate + H(+)</text>
        <dbReference type="Rhea" id="RHEA:59300"/>
        <dbReference type="ChEBI" id="CHEBI:15378"/>
        <dbReference type="ChEBI" id="CHEBI:58038"/>
        <dbReference type="ChEBI" id="CHEBI:58339"/>
        <dbReference type="ChEBI" id="CHEBI:58343"/>
        <dbReference type="ChEBI" id="CHEBI:143025"/>
    </reaction>
</comment>
<comment type="catalytic activity">
    <reaction evidence="3">
        <text>firefly L-luciferin + 3'-phosphoadenylyl sulfate = firefly L-sulfoluciferin + adenosine 3',5'-bisphosphate + H(+)</text>
        <dbReference type="Rhea" id="RHEA:59304"/>
        <dbReference type="ChEBI" id="CHEBI:15378"/>
        <dbReference type="ChEBI" id="CHEBI:58339"/>
        <dbReference type="ChEBI" id="CHEBI:58343"/>
        <dbReference type="ChEBI" id="CHEBI:138329"/>
        <dbReference type="ChEBI" id="CHEBI:143028"/>
    </reaction>
</comment>
<comment type="activity regulation">
    <text evidence="3">Sulfoluciferin formation is inhibited by the product adenosine 3',5'-bisphosphate.</text>
</comment>
<comment type="biophysicochemical properties">
    <kinetics>
        <text evidence="3">kcat is at least 3 sec(-1) with D-luciferin as substrate.</text>
    </kinetics>
</comment>
<comment type="biotechnology">
    <text evidence="6">LST may find use as a new tool to modulate existing biotechnological applications of the firefly bioluminescent system.</text>
</comment>
<comment type="miscellaneous">
    <text evidence="5">Both D- and L-luciferin stereoisomers are found within the firefly. L-luciferin is the likely biosynthetic precursor to D-luciferin, though D-luciferin is the major stereoisomer by static abundance.</text>
</comment>
<comment type="similarity">
    <text evidence="5">Belongs to the sulfotransferase 1 family.</text>
</comment>
<name>LST_PHOPY</name>